<sequence>MHLLPEFASHHAVSIPELLVSRDERQARQHAWLKRHPVPLVSFTVVAPGPIKDSEVTRRIFNHGVTALRALATKQGWQIQEQAALVSASGPEGMLSIAAPARDLKLATIELEHSHPLGRLWDIDVLTPEGDILSRRDYSLPPRRCLLCEQSAAVCARGKTHQLTDLLNRMEALLNDVDACNVN</sequence>
<reference key="1">
    <citation type="journal article" date="2006" name="Proc. Natl. Acad. Sci. U.S.A.">
        <title>Identification of genes subject to positive selection in uropathogenic strains of Escherichia coli: a comparative genomics approach.</title>
        <authorList>
            <person name="Chen S.L."/>
            <person name="Hung C.-S."/>
            <person name="Xu J."/>
            <person name="Reigstad C.S."/>
            <person name="Magrini V."/>
            <person name="Sabo A."/>
            <person name="Blasiar D."/>
            <person name="Bieri T."/>
            <person name="Meyer R.R."/>
            <person name="Ozersky P."/>
            <person name="Armstrong J.R."/>
            <person name="Fulton R.S."/>
            <person name="Latreille J.P."/>
            <person name="Spieth J."/>
            <person name="Hooton T.M."/>
            <person name="Mardis E.R."/>
            <person name="Hultgren S.J."/>
            <person name="Gordon J.I."/>
        </authorList>
    </citation>
    <scope>NUCLEOTIDE SEQUENCE [LARGE SCALE GENOMIC DNA]</scope>
    <source>
        <strain>UTI89 / UPEC</strain>
    </source>
</reference>
<accession>Q1REU8</accession>
<proteinExistence type="inferred from homology"/>
<gene>
    <name evidence="1" type="primary">citX</name>
    <name type="ordered locus">UTI89_C0616</name>
</gene>
<feature type="chain" id="PRO_1000049603" description="Apo-citrate lyase phosphoribosyl-dephospho-CoA transferase">
    <location>
        <begin position="1"/>
        <end position="183"/>
    </location>
</feature>
<name>CITX_ECOUT</name>
<dbReference type="EC" id="2.7.7.61" evidence="1"/>
<dbReference type="EMBL" id="CP000243">
    <property type="protein sequence ID" value="ABE06116.1"/>
    <property type="molecule type" value="Genomic_DNA"/>
</dbReference>
<dbReference type="RefSeq" id="WP_000550390.1">
    <property type="nucleotide sequence ID" value="NZ_CP064825.1"/>
</dbReference>
<dbReference type="SMR" id="Q1REU8"/>
<dbReference type="KEGG" id="eci:UTI89_C0616"/>
<dbReference type="HOGENOM" id="CLU_104529_1_1_6"/>
<dbReference type="Proteomes" id="UP000001952">
    <property type="component" value="Chromosome"/>
</dbReference>
<dbReference type="GO" id="GO:0050519">
    <property type="term" value="F:holo-citrate lyase synthase activity"/>
    <property type="evidence" value="ECO:0007669"/>
    <property type="project" value="UniProtKB-UniRule"/>
</dbReference>
<dbReference type="GO" id="GO:0051191">
    <property type="term" value="P:prosthetic group biosynthetic process"/>
    <property type="evidence" value="ECO:0007669"/>
    <property type="project" value="InterPro"/>
</dbReference>
<dbReference type="HAMAP" id="MF_00398">
    <property type="entry name" value="CitX"/>
    <property type="match status" value="1"/>
</dbReference>
<dbReference type="InterPro" id="IPR005551">
    <property type="entry name" value="CitX"/>
</dbReference>
<dbReference type="NCBIfam" id="TIGR03124">
    <property type="entry name" value="citrate_citX"/>
    <property type="match status" value="1"/>
</dbReference>
<dbReference type="NCBIfam" id="NF002383">
    <property type="entry name" value="PRK01392.1"/>
    <property type="match status" value="1"/>
</dbReference>
<dbReference type="Pfam" id="PF03802">
    <property type="entry name" value="CitX"/>
    <property type="match status" value="1"/>
</dbReference>
<protein>
    <recommendedName>
        <fullName>Apo-citrate lyase phosphoribosyl-dephospho-CoA transferase</fullName>
        <ecNumber evidence="1">2.7.7.61</ecNumber>
    </recommendedName>
    <alternativeName>
        <fullName evidence="1">Apo-ACP nucleodityltransferase</fullName>
    </alternativeName>
    <alternativeName>
        <fullName evidence="1">Holo-ACP synthase</fullName>
    </alternativeName>
    <alternativeName>
        <fullName evidence="1">Holo-citrate lyase synthase</fullName>
    </alternativeName>
</protein>
<comment type="function">
    <text evidence="1">Transfers 2-(5''-triphosphoribosyl)-3'-dephosphocoenzyme-A on a serine residue to the apo-acyl carrier protein (gamma chain) of the citrate lyase to yield holo-acyl carrier protein.</text>
</comment>
<comment type="catalytic activity">
    <reaction evidence="1">
        <text>apo-[citrate lyase ACP] + 2'-(5''-triphospho-alpha-D-ribosyl)-3'-dephospho-CoA = holo-[citrate lyase ACP] + diphosphate</text>
        <dbReference type="Rhea" id="RHEA:16333"/>
        <dbReference type="Rhea" id="RHEA-COMP:10157"/>
        <dbReference type="Rhea" id="RHEA-COMP:10158"/>
        <dbReference type="ChEBI" id="CHEBI:29999"/>
        <dbReference type="ChEBI" id="CHEBI:33019"/>
        <dbReference type="ChEBI" id="CHEBI:61378"/>
        <dbReference type="ChEBI" id="CHEBI:82683"/>
        <dbReference type="EC" id="2.7.7.61"/>
    </reaction>
</comment>
<comment type="similarity">
    <text evidence="1">Belongs to the CitX family.</text>
</comment>
<organism>
    <name type="scientific">Escherichia coli (strain UTI89 / UPEC)</name>
    <dbReference type="NCBI Taxonomy" id="364106"/>
    <lineage>
        <taxon>Bacteria</taxon>
        <taxon>Pseudomonadati</taxon>
        <taxon>Pseudomonadota</taxon>
        <taxon>Gammaproteobacteria</taxon>
        <taxon>Enterobacterales</taxon>
        <taxon>Enterobacteriaceae</taxon>
        <taxon>Escherichia</taxon>
    </lineage>
</organism>
<keyword id="KW-0548">Nucleotidyltransferase</keyword>
<keyword id="KW-0808">Transferase</keyword>
<evidence type="ECO:0000255" key="1">
    <source>
        <dbReference type="HAMAP-Rule" id="MF_00398"/>
    </source>
</evidence>